<organism>
    <name type="scientific">Geobacillus thermodenitrificans (strain NG80-2)</name>
    <dbReference type="NCBI Taxonomy" id="420246"/>
    <lineage>
        <taxon>Bacteria</taxon>
        <taxon>Bacillati</taxon>
        <taxon>Bacillota</taxon>
        <taxon>Bacilli</taxon>
        <taxon>Bacillales</taxon>
        <taxon>Anoxybacillaceae</taxon>
        <taxon>Geobacillus</taxon>
    </lineage>
</organism>
<keyword id="KW-0413">Isomerase</keyword>
<keyword id="KW-0819">tRNA processing</keyword>
<feature type="chain" id="PRO_1000084599" description="tRNA pseudouridine synthase B">
    <location>
        <begin position="1"/>
        <end position="302"/>
    </location>
</feature>
<feature type="active site" description="Nucleophile" evidence="1">
    <location>
        <position position="38"/>
    </location>
</feature>
<evidence type="ECO:0000255" key="1">
    <source>
        <dbReference type="HAMAP-Rule" id="MF_01080"/>
    </source>
</evidence>
<accession>A4IME0</accession>
<name>TRUB_GEOTN</name>
<proteinExistence type="inferred from homology"/>
<reference key="1">
    <citation type="journal article" date="2007" name="Proc. Natl. Acad. Sci. U.S.A.">
        <title>Genome and proteome of long-chain alkane degrading Geobacillus thermodenitrificans NG80-2 isolated from a deep-subsurface oil reservoir.</title>
        <authorList>
            <person name="Feng L."/>
            <person name="Wang W."/>
            <person name="Cheng J."/>
            <person name="Ren Y."/>
            <person name="Zhao G."/>
            <person name="Gao C."/>
            <person name="Tang Y."/>
            <person name="Liu X."/>
            <person name="Han W."/>
            <person name="Peng X."/>
            <person name="Liu R."/>
            <person name="Wang L."/>
        </authorList>
    </citation>
    <scope>NUCLEOTIDE SEQUENCE [LARGE SCALE GENOMIC DNA]</scope>
    <source>
        <strain>NG80-2</strain>
    </source>
</reference>
<comment type="function">
    <text evidence="1">Responsible for synthesis of pseudouridine from uracil-55 in the psi GC loop of transfer RNAs.</text>
</comment>
<comment type="catalytic activity">
    <reaction evidence="1">
        <text>uridine(55) in tRNA = pseudouridine(55) in tRNA</text>
        <dbReference type="Rhea" id="RHEA:42532"/>
        <dbReference type="Rhea" id="RHEA-COMP:10101"/>
        <dbReference type="Rhea" id="RHEA-COMP:10102"/>
        <dbReference type="ChEBI" id="CHEBI:65314"/>
        <dbReference type="ChEBI" id="CHEBI:65315"/>
        <dbReference type="EC" id="5.4.99.25"/>
    </reaction>
</comment>
<comment type="similarity">
    <text evidence="1">Belongs to the pseudouridine synthase TruB family. Type 1 subfamily.</text>
</comment>
<gene>
    <name evidence="1" type="primary">truB</name>
    <name type="ordered locus">GTNG_1120</name>
</gene>
<sequence>MDGVLLLNKPKGMTSHDCVAKVRRLLGIKKVGHTGTLDPNVSGVLPICLGKATRIAEFLTGATKTYEGEVTLGAATSTEDADGDIIAVQTVDRTIARAEIEAVFRSLTGDIEQTPPMYSAVKVNGKKLYEYARAGIEVERPTRRVTIYELELLDEREQFVGETVSFRFRVMCSKGTYVRTLAVTIGERLGYPAHMSDLIRTASGPFQLADCVTLEEVERRAADGTVDALLIPIEQALFHLPKYEISDKVAEKVKNGALLRLPAFLQELDGPVLLVTPEREAMALYVKHPARPGVMKPLKVFR</sequence>
<dbReference type="EC" id="5.4.99.25" evidence="1"/>
<dbReference type="EMBL" id="CP000557">
    <property type="protein sequence ID" value="ABO66494.1"/>
    <property type="molecule type" value="Genomic_DNA"/>
</dbReference>
<dbReference type="RefSeq" id="WP_008878541.1">
    <property type="nucleotide sequence ID" value="NC_009328.1"/>
</dbReference>
<dbReference type="SMR" id="A4IME0"/>
<dbReference type="GeneID" id="87621288"/>
<dbReference type="KEGG" id="gtn:GTNG_1120"/>
<dbReference type="eggNOG" id="COG0130">
    <property type="taxonomic scope" value="Bacteria"/>
</dbReference>
<dbReference type="HOGENOM" id="CLU_032087_0_1_9"/>
<dbReference type="Proteomes" id="UP000001578">
    <property type="component" value="Chromosome"/>
</dbReference>
<dbReference type="GO" id="GO:0003723">
    <property type="term" value="F:RNA binding"/>
    <property type="evidence" value="ECO:0007669"/>
    <property type="project" value="InterPro"/>
</dbReference>
<dbReference type="GO" id="GO:0160148">
    <property type="term" value="F:tRNA pseudouridine(55) synthase activity"/>
    <property type="evidence" value="ECO:0007669"/>
    <property type="project" value="UniProtKB-EC"/>
</dbReference>
<dbReference type="GO" id="GO:1990481">
    <property type="term" value="P:mRNA pseudouridine synthesis"/>
    <property type="evidence" value="ECO:0007669"/>
    <property type="project" value="TreeGrafter"/>
</dbReference>
<dbReference type="GO" id="GO:0031119">
    <property type="term" value="P:tRNA pseudouridine synthesis"/>
    <property type="evidence" value="ECO:0007669"/>
    <property type="project" value="UniProtKB-UniRule"/>
</dbReference>
<dbReference type="CDD" id="cd02573">
    <property type="entry name" value="PseudoU_synth_EcTruB"/>
    <property type="match status" value="1"/>
</dbReference>
<dbReference type="FunFam" id="3.30.2350.10:FF:000011">
    <property type="entry name" value="tRNA pseudouridine synthase B"/>
    <property type="match status" value="1"/>
</dbReference>
<dbReference type="Gene3D" id="3.30.2350.10">
    <property type="entry name" value="Pseudouridine synthase"/>
    <property type="match status" value="1"/>
</dbReference>
<dbReference type="HAMAP" id="MF_01080">
    <property type="entry name" value="TruB_bact"/>
    <property type="match status" value="1"/>
</dbReference>
<dbReference type="InterPro" id="IPR020103">
    <property type="entry name" value="PsdUridine_synth_cat_dom_sf"/>
</dbReference>
<dbReference type="InterPro" id="IPR002501">
    <property type="entry name" value="PsdUridine_synth_N"/>
</dbReference>
<dbReference type="InterPro" id="IPR014780">
    <property type="entry name" value="tRNA_psdUridine_synth_TruB"/>
</dbReference>
<dbReference type="InterPro" id="IPR032819">
    <property type="entry name" value="TruB_C"/>
</dbReference>
<dbReference type="NCBIfam" id="TIGR00431">
    <property type="entry name" value="TruB"/>
    <property type="match status" value="1"/>
</dbReference>
<dbReference type="PANTHER" id="PTHR13767:SF2">
    <property type="entry name" value="PSEUDOURIDYLATE SYNTHASE TRUB1"/>
    <property type="match status" value="1"/>
</dbReference>
<dbReference type="PANTHER" id="PTHR13767">
    <property type="entry name" value="TRNA-PSEUDOURIDINE SYNTHASE"/>
    <property type="match status" value="1"/>
</dbReference>
<dbReference type="Pfam" id="PF16198">
    <property type="entry name" value="TruB_C_2"/>
    <property type="match status" value="1"/>
</dbReference>
<dbReference type="Pfam" id="PF01509">
    <property type="entry name" value="TruB_N"/>
    <property type="match status" value="1"/>
</dbReference>
<dbReference type="SUPFAM" id="SSF55120">
    <property type="entry name" value="Pseudouridine synthase"/>
    <property type="match status" value="1"/>
</dbReference>
<protein>
    <recommendedName>
        <fullName evidence="1">tRNA pseudouridine synthase B</fullName>
        <ecNumber evidence="1">5.4.99.25</ecNumber>
    </recommendedName>
    <alternativeName>
        <fullName evidence="1">tRNA pseudouridine(55) synthase</fullName>
        <shortName evidence="1">Psi55 synthase</shortName>
    </alternativeName>
    <alternativeName>
        <fullName evidence="1">tRNA pseudouridylate synthase</fullName>
    </alternativeName>
    <alternativeName>
        <fullName evidence="1">tRNA-uridine isomerase</fullName>
    </alternativeName>
</protein>